<dbReference type="EC" id="4.1.1.50"/>
<dbReference type="EMBL" id="U80916">
    <property type="protein sequence ID" value="AAB88273.1"/>
    <property type="molecule type" value="mRNA"/>
</dbReference>
<dbReference type="PIR" id="T10750">
    <property type="entry name" value="T10750"/>
</dbReference>
<dbReference type="SMR" id="O49972"/>
<dbReference type="BRENDA" id="4.1.1.50">
    <property type="organism ID" value="941"/>
</dbReference>
<dbReference type="UniPathway" id="UPA00331">
    <property type="reaction ID" value="UER00451"/>
</dbReference>
<dbReference type="GO" id="GO:0005829">
    <property type="term" value="C:cytosol"/>
    <property type="evidence" value="ECO:0007669"/>
    <property type="project" value="TreeGrafter"/>
</dbReference>
<dbReference type="GO" id="GO:0004014">
    <property type="term" value="F:adenosylmethionine decarboxylase activity"/>
    <property type="evidence" value="ECO:0007669"/>
    <property type="project" value="UniProtKB-EC"/>
</dbReference>
<dbReference type="GO" id="GO:0008295">
    <property type="term" value="P:spermidine biosynthetic process"/>
    <property type="evidence" value="ECO:0007669"/>
    <property type="project" value="UniProtKB-KW"/>
</dbReference>
<dbReference type="GO" id="GO:0006597">
    <property type="term" value="P:spermine biosynthetic process"/>
    <property type="evidence" value="ECO:0007669"/>
    <property type="project" value="InterPro"/>
</dbReference>
<dbReference type="FunFam" id="3.30.360.50:FF:000001">
    <property type="entry name" value="S-adenosylmethionine decarboxylase proenzyme"/>
    <property type="match status" value="1"/>
</dbReference>
<dbReference type="FunFam" id="3.60.90.10:FF:000002">
    <property type="entry name" value="S-adenosylmethionine decarboxylase proenzyme"/>
    <property type="match status" value="1"/>
</dbReference>
<dbReference type="Gene3D" id="3.30.360.50">
    <property type="entry name" value="S-adenosylmethionine decarboxylase"/>
    <property type="match status" value="1"/>
</dbReference>
<dbReference type="Gene3D" id="3.60.90.10">
    <property type="entry name" value="S-adenosylmethionine decarboxylase"/>
    <property type="match status" value="1"/>
</dbReference>
<dbReference type="InterPro" id="IPR048283">
    <property type="entry name" value="AdoMetDC-like"/>
</dbReference>
<dbReference type="InterPro" id="IPR001985">
    <property type="entry name" value="S-AdoMet_decarboxylase_euk"/>
</dbReference>
<dbReference type="InterPro" id="IPR016067">
    <property type="entry name" value="S-AdoMet_deCO2ase_core"/>
</dbReference>
<dbReference type="InterPro" id="IPR018166">
    <property type="entry name" value="S-AdoMet_deCO2ase_CS"/>
</dbReference>
<dbReference type="NCBIfam" id="TIGR00535">
    <property type="entry name" value="SAM_DCase"/>
    <property type="match status" value="1"/>
</dbReference>
<dbReference type="PANTHER" id="PTHR11570">
    <property type="entry name" value="S-ADENOSYLMETHIONINE DECARBOXYLASE"/>
    <property type="match status" value="1"/>
</dbReference>
<dbReference type="PANTHER" id="PTHR11570:SF32">
    <property type="entry name" value="S-ADENOSYLMETHIONINE DECARBOXYLASE PROENZYME 2"/>
    <property type="match status" value="1"/>
</dbReference>
<dbReference type="Pfam" id="PF01536">
    <property type="entry name" value="SAM_decarbox"/>
    <property type="match status" value="1"/>
</dbReference>
<dbReference type="PIRSF" id="PIRSF001355">
    <property type="entry name" value="S-AdenosylMet_decarboxylase"/>
    <property type="match status" value="1"/>
</dbReference>
<dbReference type="SUPFAM" id="SSF56276">
    <property type="entry name" value="S-adenosylmethionine decarboxylase"/>
    <property type="match status" value="1"/>
</dbReference>
<dbReference type="PROSITE" id="PS01336">
    <property type="entry name" value="ADOMETDC"/>
    <property type="match status" value="1"/>
</dbReference>
<gene>
    <name type="primary">SAMDC2</name>
</gene>
<name>DCAM2_BRAJU</name>
<feature type="chain" id="PRO_0000029993" description="S-adenosylmethionine decarboxylase 2 beta chain" evidence="1">
    <location>
        <begin position="1"/>
        <end position="68"/>
    </location>
</feature>
<feature type="chain" id="PRO_0000029994" description="S-adenosylmethionine decarboxylase 2 alpha chain" evidence="1">
    <location>
        <begin position="69"/>
        <end position="369"/>
    </location>
</feature>
<feature type="active site" evidence="1">
    <location>
        <position position="9"/>
    </location>
</feature>
<feature type="active site" evidence="1">
    <location>
        <position position="12"/>
    </location>
</feature>
<feature type="active site" description="Schiff-base intermediate with substrate; via pyruvic acid" evidence="1">
    <location>
        <position position="69"/>
    </location>
</feature>
<feature type="active site" description="Proton donor; for catalytic activity" evidence="1">
    <location>
        <position position="83"/>
    </location>
</feature>
<feature type="active site" description="Proton acceptor; for processing activity" evidence="1">
    <location>
        <position position="236"/>
    </location>
</feature>
<feature type="active site" description="Proton acceptor; for processing activity" evidence="1">
    <location>
        <position position="249"/>
    </location>
</feature>
<feature type="site" description="Cleavage (non-hydrolytic); by autolysis" evidence="1">
    <location>
        <begin position="68"/>
        <end position="69"/>
    </location>
</feature>
<feature type="modified residue" description="Pyruvic acid (Ser); by autocatalysis" evidence="1">
    <location>
        <position position="69"/>
    </location>
</feature>
<keyword id="KW-0068">Autocatalytic cleavage</keyword>
<keyword id="KW-0210">Decarboxylase</keyword>
<keyword id="KW-0456">Lyase</keyword>
<keyword id="KW-0620">Polyamine biosynthesis</keyword>
<keyword id="KW-0670">Pyruvate</keyword>
<keyword id="KW-0949">S-adenosyl-L-methionine</keyword>
<keyword id="KW-0704">Schiff base</keyword>
<keyword id="KW-0745">Spermidine biosynthesis</keyword>
<keyword id="KW-0865">Zymogen</keyword>
<organism>
    <name type="scientific">Brassica juncea</name>
    <name type="common">Indian mustard</name>
    <name type="synonym">Sinapis juncea</name>
    <dbReference type="NCBI Taxonomy" id="3707"/>
    <lineage>
        <taxon>Eukaryota</taxon>
        <taxon>Viridiplantae</taxon>
        <taxon>Streptophyta</taxon>
        <taxon>Embryophyta</taxon>
        <taxon>Tracheophyta</taxon>
        <taxon>Spermatophyta</taxon>
        <taxon>Magnoliopsida</taxon>
        <taxon>eudicotyledons</taxon>
        <taxon>Gunneridae</taxon>
        <taxon>Pentapetalae</taxon>
        <taxon>rosids</taxon>
        <taxon>malvids</taxon>
        <taxon>Brassicales</taxon>
        <taxon>Brassicaceae</taxon>
        <taxon>Brassiceae</taxon>
        <taxon>Brassica</taxon>
    </lineage>
</organism>
<reference key="1">
    <citation type="online journal article" date="1997" name="Plant Gene Register">
        <title>Molecular cloning of two cDNAs encoding S-adenosyl-L-methionine decarboxylase in mustard (Brassica juncea [L.] Czern &amp; Coss).</title>
        <authorList>
            <person name="Lee T."/>
            <person name="Liu J.-J."/>
            <person name="Pua E.-C."/>
        </authorList>
        <locator>PGR97-157</locator>
    </citation>
    <scope>NUCLEOTIDE SEQUENCE [MRNA]</scope>
</reference>
<protein>
    <recommendedName>
        <fullName>S-adenosylmethionine decarboxylase proenzyme 2</fullName>
        <shortName>AdoMetDC 2</shortName>
        <shortName>SAMDC 2</shortName>
        <ecNumber>4.1.1.50</ecNumber>
    </recommendedName>
    <component>
        <recommendedName>
            <fullName>S-adenosylmethionine decarboxylase 2 alpha chain</fullName>
        </recommendedName>
    </component>
    <component>
        <recommendedName>
            <fullName>S-adenosylmethionine decarboxylase 2 beta chain</fullName>
        </recommendedName>
    </component>
</protein>
<evidence type="ECO:0000250" key="1"/>
<evidence type="ECO:0000305" key="2"/>
<sequence length="369" mass="40628">MSVSAIGFEGYEKRLEVSFFEPSLFVDTHGKGLRALPKSQIDEILAPAECTIVSSLSNDELDSYVLSESSLFIFPYKIIIKTCGTTKLLPSIEPLLRLAGELSLEVKSVRYTRGSFLCPGGQPFPHRNFSEEVSVLDGHFAKMGLSSVAYLMGDDDETKKWHVYSASAPARNGNGNNNNNVYTLEMCMTGLDKEKASVFYKNESSSAGSMTDNSGIRKILPQSQICDFEFEPCGYSMNSVEGDAISTIHVTPEDGFSYASFEAVGYDFTTMDLSHLVSKVLTCFEPKQFSVAVHSSVAQKSYDSGLSVDLEDYGCRETTIELLGEERGTVMYQSFEKLGRYCGSPRSTLKCEWSSSSSCTSEDEKEEGI</sequence>
<accession>O49972</accession>
<proteinExistence type="evidence at transcript level"/>
<comment type="catalytic activity">
    <reaction>
        <text>S-adenosyl-L-methionine + H(+) = S-adenosyl 3-(methylsulfanyl)propylamine + CO2</text>
        <dbReference type="Rhea" id="RHEA:15981"/>
        <dbReference type="ChEBI" id="CHEBI:15378"/>
        <dbReference type="ChEBI" id="CHEBI:16526"/>
        <dbReference type="ChEBI" id="CHEBI:57443"/>
        <dbReference type="ChEBI" id="CHEBI:59789"/>
        <dbReference type="EC" id="4.1.1.50"/>
    </reaction>
</comment>
<comment type="cofactor">
    <cofactor evidence="1">
        <name>pyruvate</name>
        <dbReference type="ChEBI" id="CHEBI:15361"/>
    </cofactor>
    <text evidence="1">Binds 1 pyruvoyl group covalently per subunit.</text>
</comment>
<comment type="pathway">
    <text>Amine and polyamine biosynthesis; S-adenosylmethioninamine biosynthesis; S-adenosylmethioninamine from S-adenosyl-L-methionine: step 1/1.</text>
</comment>
<comment type="PTM">
    <text evidence="1">Is synthesized initially as an inactive proenzyme. Formation of the active enzyme involves a self-maturation process in which the active site pyruvoyl group is generated from an internal serine residue via an autocatalytic post-translational modification. Two non-identical subunits are generated from the proenzyme in this reaction, and the pyruvate is formed at the N-terminus of the alpha chain, which is derived from the carboxyl end of the proenzyme. The post-translation cleavage follows an unusual pathway, termed non-hydrolytic serinolysis, in which the side chain hydroxyl group of the serine supplies its oxygen atom to form the C-terminus of the beta chain, while the remainder of the serine residue undergoes an oxidative deamination to produce ammonia and the pyruvoyl group blocking the N-terminus of the alpha chain (By similarity).</text>
</comment>
<comment type="similarity">
    <text evidence="2">Belongs to the eukaryotic AdoMetDC family.</text>
</comment>